<feature type="chain" id="PRO_1000142620" description="Large ribosomal subunit protein uL18">
    <location>
        <begin position="1"/>
        <end position="120"/>
    </location>
</feature>
<feature type="region of interest" description="Disordered" evidence="2">
    <location>
        <begin position="1"/>
        <end position="24"/>
    </location>
</feature>
<feature type="compositionally biased region" description="Basic residues" evidence="2">
    <location>
        <begin position="9"/>
        <end position="20"/>
    </location>
</feature>
<evidence type="ECO:0000255" key="1">
    <source>
        <dbReference type="HAMAP-Rule" id="MF_01337"/>
    </source>
</evidence>
<evidence type="ECO:0000256" key="2">
    <source>
        <dbReference type="SAM" id="MobiDB-lite"/>
    </source>
</evidence>
<evidence type="ECO:0000305" key="3"/>
<name>RL18_BACMK</name>
<accession>A9VP93</accession>
<keyword id="KW-0687">Ribonucleoprotein</keyword>
<keyword id="KW-0689">Ribosomal protein</keyword>
<keyword id="KW-0694">RNA-binding</keyword>
<keyword id="KW-0699">rRNA-binding</keyword>
<proteinExistence type="inferred from homology"/>
<organism>
    <name type="scientific">Bacillus mycoides (strain KBAB4)</name>
    <name type="common">Bacillus weihenstephanensis</name>
    <dbReference type="NCBI Taxonomy" id="315730"/>
    <lineage>
        <taxon>Bacteria</taxon>
        <taxon>Bacillati</taxon>
        <taxon>Bacillota</taxon>
        <taxon>Bacilli</taxon>
        <taxon>Bacillales</taxon>
        <taxon>Bacillaceae</taxon>
        <taxon>Bacillus</taxon>
        <taxon>Bacillus cereus group</taxon>
    </lineage>
</organism>
<reference key="1">
    <citation type="journal article" date="2008" name="Chem. Biol. Interact.">
        <title>Extending the Bacillus cereus group genomics to putative food-borne pathogens of different toxicity.</title>
        <authorList>
            <person name="Lapidus A."/>
            <person name="Goltsman E."/>
            <person name="Auger S."/>
            <person name="Galleron N."/>
            <person name="Segurens B."/>
            <person name="Dossat C."/>
            <person name="Land M.L."/>
            <person name="Broussolle V."/>
            <person name="Brillard J."/>
            <person name="Guinebretiere M.-H."/>
            <person name="Sanchis V."/>
            <person name="Nguen-the C."/>
            <person name="Lereclus D."/>
            <person name="Richardson P."/>
            <person name="Wincker P."/>
            <person name="Weissenbach J."/>
            <person name="Ehrlich S.D."/>
            <person name="Sorokin A."/>
        </authorList>
    </citation>
    <scope>NUCLEOTIDE SEQUENCE [LARGE SCALE GENOMIC DNA]</scope>
    <source>
        <strain>KBAB4</strain>
    </source>
</reference>
<dbReference type="EMBL" id="CP000903">
    <property type="protein sequence ID" value="ABY41390.1"/>
    <property type="molecule type" value="Genomic_DNA"/>
</dbReference>
<dbReference type="RefSeq" id="WP_002009761.1">
    <property type="nucleotide sequence ID" value="NZ_CAKMRX030000129.1"/>
</dbReference>
<dbReference type="SMR" id="A9VP93"/>
<dbReference type="GeneID" id="66264805"/>
<dbReference type="KEGG" id="bwe:BcerKBAB4_0121"/>
<dbReference type="eggNOG" id="COG0256">
    <property type="taxonomic scope" value="Bacteria"/>
</dbReference>
<dbReference type="HOGENOM" id="CLU_098841_0_1_9"/>
<dbReference type="Proteomes" id="UP000002154">
    <property type="component" value="Chromosome"/>
</dbReference>
<dbReference type="GO" id="GO:0022625">
    <property type="term" value="C:cytosolic large ribosomal subunit"/>
    <property type="evidence" value="ECO:0007669"/>
    <property type="project" value="TreeGrafter"/>
</dbReference>
<dbReference type="GO" id="GO:0008097">
    <property type="term" value="F:5S rRNA binding"/>
    <property type="evidence" value="ECO:0007669"/>
    <property type="project" value="TreeGrafter"/>
</dbReference>
<dbReference type="GO" id="GO:0003735">
    <property type="term" value="F:structural constituent of ribosome"/>
    <property type="evidence" value="ECO:0007669"/>
    <property type="project" value="InterPro"/>
</dbReference>
<dbReference type="GO" id="GO:0006412">
    <property type="term" value="P:translation"/>
    <property type="evidence" value="ECO:0007669"/>
    <property type="project" value="UniProtKB-UniRule"/>
</dbReference>
<dbReference type="CDD" id="cd00432">
    <property type="entry name" value="Ribosomal_L18_L5e"/>
    <property type="match status" value="1"/>
</dbReference>
<dbReference type="FunFam" id="3.30.420.100:FF:000001">
    <property type="entry name" value="50S ribosomal protein L18"/>
    <property type="match status" value="1"/>
</dbReference>
<dbReference type="Gene3D" id="3.30.420.100">
    <property type="match status" value="1"/>
</dbReference>
<dbReference type="HAMAP" id="MF_01337_B">
    <property type="entry name" value="Ribosomal_uL18_B"/>
    <property type="match status" value="1"/>
</dbReference>
<dbReference type="InterPro" id="IPR004389">
    <property type="entry name" value="Ribosomal_uL18_bac-type"/>
</dbReference>
<dbReference type="InterPro" id="IPR005484">
    <property type="entry name" value="Ribosomal_uL18_bac/euk"/>
</dbReference>
<dbReference type="NCBIfam" id="TIGR00060">
    <property type="entry name" value="L18_bact"/>
    <property type="match status" value="1"/>
</dbReference>
<dbReference type="PANTHER" id="PTHR12899">
    <property type="entry name" value="39S RIBOSOMAL PROTEIN L18, MITOCHONDRIAL"/>
    <property type="match status" value="1"/>
</dbReference>
<dbReference type="PANTHER" id="PTHR12899:SF3">
    <property type="entry name" value="LARGE RIBOSOMAL SUBUNIT PROTEIN UL18M"/>
    <property type="match status" value="1"/>
</dbReference>
<dbReference type="Pfam" id="PF00861">
    <property type="entry name" value="Ribosomal_L18p"/>
    <property type="match status" value="1"/>
</dbReference>
<dbReference type="SUPFAM" id="SSF53137">
    <property type="entry name" value="Translational machinery components"/>
    <property type="match status" value="1"/>
</dbReference>
<gene>
    <name evidence="1" type="primary">rplR</name>
    <name type="ordered locus">BcerKBAB4_0121</name>
</gene>
<protein>
    <recommendedName>
        <fullName evidence="1">Large ribosomal subunit protein uL18</fullName>
    </recommendedName>
    <alternativeName>
        <fullName evidence="3">50S ribosomal protein L18</fullName>
    </alternativeName>
</protein>
<comment type="function">
    <text evidence="1">This is one of the proteins that bind and probably mediate the attachment of the 5S RNA into the large ribosomal subunit, where it forms part of the central protuberance.</text>
</comment>
<comment type="subunit">
    <text evidence="1">Part of the 50S ribosomal subunit; part of the 5S rRNA/L5/L18/L25 subcomplex. Contacts the 5S and 23S rRNAs.</text>
</comment>
<comment type="similarity">
    <text evidence="1">Belongs to the universal ribosomal protein uL18 family.</text>
</comment>
<sequence length="120" mass="13066">MITKAAKNATRKKRHARVRAKLTGTAERPRLNVYRSNQHIYAQVIDDVNGVTLVSASTLDKDLALNGTSNTEAATKVGESVAKRAVEKGVKEVVFDRGGYLYHGRVKALAEAAREAGLQF</sequence>